<proteinExistence type="evidence at transcript level"/>
<organism>
    <name type="scientific">Emericella nidulans (strain FGSC A4 / ATCC 38163 / CBS 112.46 / NRRL 194 / M139)</name>
    <name type="common">Aspergillus nidulans</name>
    <dbReference type="NCBI Taxonomy" id="227321"/>
    <lineage>
        <taxon>Eukaryota</taxon>
        <taxon>Fungi</taxon>
        <taxon>Dikarya</taxon>
        <taxon>Ascomycota</taxon>
        <taxon>Pezizomycotina</taxon>
        <taxon>Eurotiomycetes</taxon>
        <taxon>Eurotiomycetidae</taxon>
        <taxon>Eurotiales</taxon>
        <taxon>Aspergillaceae</taxon>
        <taxon>Aspergillus</taxon>
        <taxon>Aspergillus subgen. Nidulantes</taxon>
    </lineage>
</organism>
<keyword id="KW-0378">Hydrolase</keyword>
<keyword id="KW-1185">Reference proteome</keyword>
<accession>P08158</accession>
<accession>C8V9R2</accession>
<accession>Q5ASF3</accession>
<sequence>MPQSWEELAADKRARLAKTIPDEWKVQTLPAEDSVIDFPKKSGILSEAELKITEASAADLVSKLAAGELTSVEVTLAFCKRAAIAQQLTNCAHEFFPDAALAQARELDEYYAKHKRPVGPLHGLPISLKDQLRVKGYETSMGYISWLNKYDEGDSVLTTMLRKAGAVFYVKTSVPQTLMVCETVNNIIGRTVNPRNKNWSCGGSSGGEGAIVGIRGGVIGVGTDIGGSIRVPAAFNFLYGLRPSHGRLPYAKMANSMEGQETVHSVVGPITHSVEDLRLFTKSVLGQEPWKYDSKVIPMPWRQSESDIIASKIKNGGLNIGYYNFDGNVLPHPPILRGVETTVAALAKAGHTVTPWTPYKHDFGHDLISHIYAADGSADVMRDISASGEPAIPNIKDLLNPNIKAVNMNELWDTHLQKWNYQMEYLEKWREAEEKAGKELDAIIAPITPTAAVRHDQFRYYGYASVINLLDFTSVVVPVTFADKNIDKKNESFKAVSELDALVQEEYDPEAYHGAPVAVQVIGRRLSEERTLAIAEEVGKLLGNVVTP</sequence>
<dbReference type="EC" id="3.5.1.4"/>
<dbReference type="EMBL" id="M16371">
    <property type="protein sequence ID" value="AAA33295.1"/>
    <property type="molecule type" value="Genomic_DNA"/>
</dbReference>
<dbReference type="EMBL" id="AACD01000161">
    <property type="protein sequence ID" value="EAA60570.1"/>
    <property type="molecule type" value="Genomic_DNA"/>
</dbReference>
<dbReference type="EMBL" id="BN001303">
    <property type="protein sequence ID" value="CBF78041.1"/>
    <property type="molecule type" value="Genomic_DNA"/>
</dbReference>
<dbReference type="PIR" id="A26511">
    <property type="entry name" value="A26511"/>
</dbReference>
<dbReference type="RefSeq" id="XP_682046.1">
    <property type="nucleotide sequence ID" value="XM_676954.1"/>
</dbReference>
<dbReference type="SMR" id="P08158"/>
<dbReference type="FunCoup" id="P08158">
    <property type="interactions" value="48"/>
</dbReference>
<dbReference type="STRING" id="227321.P08158"/>
<dbReference type="EnsemblFungi" id="CBF78041">
    <property type="protein sequence ID" value="CBF78041"/>
    <property type="gene ID" value="ANIA_08777"/>
</dbReference>
<dbReference type="KEGG" id="ani:ANIA_08777"/>
<dbReference type="VEuPathDB" id="FungiDB:AN8777"/>
<dbReference type="eggNOG" id="KOG1212">
    <property type="taxonomic scope" value="Eukaryota"/>
</dbReference>
<dbReference type="HOGENOM" id="CLU_009600_9_2_1"/>
<dbReference type="InParanoid" id="P08158"/>
<dbReference type="OMA" id="QFKYYGY"/>
<dbReference type="OrthoDB" id="6428749at2759"/>
<dbReference type="Proteomes" id="UP000000560">
    <property type="component" value="Chromosome III"/>
</dbReference>
<dbReference type="GO" id="GO:0004040">
    <property type="term" value="F:amidase activity"/>
    <property type="evidence" value="ECO:0007669"/>
    <property type="project" value="UniProtKB-EC"/>
</dbReference>
<dbReference type="GO" id="GO:0043605">
    <property type="term" value="P:amide catabolic process"/>
    <property type="evidence" value="ECO:0000318"/>
    <property type="project" value="GO_Central"/>
</dbReference>
<dbReference type="GO" id="GO:0034251">
    <property type="term" value="P:regulation of amide catabolic process"/>
    <property type="evidence" value="ECO:0000315"/>
    <property type="project" value="AspGD"/>
</dbReference>
<dbReference type="FunFam" id="3.90.1300.10:FF:000003">
    <property type="entry name" value="Amidase signature enzyme"/>
    <property type="match status" value="1"/>
</dbReference>
<dbReference type="Gene3D" id="3.90.1300.10">
    <property type="entry name" value="Amidase signature (AS) domain"/>
    <property type="match status" value="1"/>
</dbReference>
<dbReference type="InterPro" id="IPR020556">
    <property type="entry name" value="Amidase_CS"/>
</dbReference>
<dbReference type="InterPro" id="IPR023631">
    <property type="entry name" value="Amidase_dom"/>
</dbReference>
<dbReference type="InterPro" id="IPR036928">
    <property type="entry name" value="AS_sf"/>
</dbReference>
<dbReference type="PANTHER" id="PTHR46072:SF9">
    <property type="entry name" value="ACETAMIDASE"/>
    <property type="match status" value="1"/>
</dbReference>
<dbReference type="PANTHER" id="PTHR46072">
    <property type="entry name" value="AMIDASE-RELATED-RELATED"/>
    <property type="match status" value="1"/>
</dbReference>
<dbReference type="Pfam" id="PF01425">
    <property type="entry name" value="Amidase"/>
    <property type="match status" value="1"/>
</dbReference>
<dbReference type="PIRSF" id="PIRSF001221">
    <property type="entry name" value="Amidase_fungi"/>
    <property type="match status" value="1"/>
</dbReference>
<dbReference type="SUPFAM" id="SSF75304">
    <property type="entry name" value="Amidase signature (AS) enzymes"/>
    <property type="match status" value="1"/>
</dbReference>
<dbReference type="PROSITE" id="PS00571">
    <property type="entry name" value="AMIDASES"/>
    <property type="match status" value="1"/>
</dbReference>
<reference key="1">
    <citation type="journal article" date="1987" name="Gene">
        <title>The nucleotide sequence of the amdS gene of Aspergillus nidulans and the molecular characterization of 5' mutations.</title>
        <authorList>
            <person name="Corrick C.M."/>
            <person name="Twomey A.P."/>
            <person name="Hynes M.J."/>
        </authorList>
    </citation>
    <scope>NUCLEOTIDE SEQUENCE [GENOMIC DNA]</scope>
</reference>
<reference key="2">
    <citation type="journal article" date="2005" name="Nature">
        <title>Sequencing of Aspergillus nidulans and comparative analysis with A. fumigatus and A. oryzae.</title>
        <authorList>
            <person name="Galagan J.E."/>
            <person name="Calvo S.E."/>
            <person name="Cuomo C."/>
            <person name="Ma L.-J."/>
            <person name="Wortman J.R."/>
            <person name="Batzoglou S."/>
            <person name="Lee S.-I."/>
            <person name="Bastuerkmen M."/>
            <person name="Spevak C.C."/>
            <person name="Clutterbuck J."/>
            <person name="Kapitonov V."/>
            <person name="Jurka J."/>
            <person name="Scazzocchio C."/>
            <person name="Farman M.L."/>
            <person name="Butler J."/>
            <person name="Purcell S."/>
            <person name="Harris S."/>
            <person name="Braus G.H."/>
            <person name="Draht O."/>
            <person name="Busch S."/>
            <person name="D'Enfert C."/>
            <person name="Bouchier C."/>
            <person name="Goldman G.H."/>
            <person name="Bell-Pedersen D."/>
            <person name="Griffiths-Jones S."/>
            <person name="Doonan J.H."/>
            <person name="Yu J."/>
            <person name="Vienken K."/>
            <person name="Pain A."/>
            <person name="Freitag M."/>
            <person name="Selker E.U."/>
            <person name="Archer D.B."/>
            <person name="Penalva M.A."/>
            <person name="Oakley B.R."/>
            <person name="Momany M."/>
            <person name="Tanaka T."/>
            <person name="Kumagai T."/>
            <person name="Asai K."/>
            <person name="Machida M."/>
            <person name="Nierman W.C."/>
            <person name="Denning D.W."/>
            <person name="Caddick M.X."/>
            <person name="Hynes M."/>
            <person name="Paoletti M."/>
            <person name="Fischer R."/>
            <person name="Miller B.L."/>
            <person name="Dyer P.S."/>
            <person name="Sachs M.S."/>
            <person name="Osmani S.A."/>
            <person name="Birren B.W."/>
        </authorList>
    </citation>
    <scope>NUCLEOTIDE SEQUENCE [LARGE SCALE GENOMIC DNA]</scope>
    <source>
        <strain>FGSC A4 / ATCC 38163 / CBS 112.46 / NRRL 194 / M139</strain>
    </source>
</reference>
<reference key="3">
    <citation type="journal article" date="2009" name="Fungal Genet. Biol.">
        <title>The 2008 update of the Aspergillus nidulans genome annotation: a community effort.</title>
        <authorList>
            <person name="Wortman J.R."/>
            <person name="Gilsenan J.M."/>
            <person name="Joardar V."/>
            <person name="Deegan J."/>
            <person name="Clutterbuck J."/>
            <person name="Andersen M.R."/>
            <person name="Archer D."/>
            <person name="Bencina M."/>
            <person name="Braus G."/>
            <person name="Coutinho P."/>
            <person name="von Dohren H."/>
            <person name="Doonan J."/>
            <person name="Driessen A.J."/>
            <person name="Durek P."/>
            <person name="Espeso E."/>
            <person name="Fekete E."/>
            <person name="Flipphi M."/>
            <person name="Estrada C.G."/>
            <person name="Geysens S."/>
            <person name="Goldman G."/>
            <person name="de Groot P.W."/>
            <person name="Hansen K."/>
            <person name="Harris S.D."/>
            <person name="Heinekamp T."/>
            <person name="Helmstaedt K."/>
            <person name="Henrissat B."/>
            <person name="Hofmann G."/>
            <person name="Homan T."/>
            <person name="Horio T."/>
            <person name="Horiuchi H."/>
            <person name="James S."/>
            <person name="Jones M."/>
            <person name="Karaffa L."/>
            <person name="Karanyi Z."/>
            <person name="Kato M."/>
            <person name="Keller N."/>
            <person name="Kelly D.E."/>
            <person name="Kiel J.A."/>
            <person name="Kim J.M."/>
            <person name="van der Klei I.J."/>
            <person name="Klis F.M."/>
            <person name="Kovalchuk A."/>
            <person name="Krasevec N."/>
            <person name="Kubicek C.P."/>
            <person name="Liu B."/>
            <person name="Maccabe A."/>
            <person name="Meyer V."/>
            <person name="Mirabito P."/>
            <person name="Miskei M."/>
            <person name="Mos M."/>
            <person name="Mullins J."/>
            <person name="Nelson D.R."/>
            <person name="Nielsen J."/>
            <person name="Oakley B.R."/>
            <person name="Osmani S.A."/>
            <person name="Pakula T."/>
            <person name="Paszewski A."/>
            <person name="Paulsen I."/>
            <person name="Pilsyk S."/>
            <person name="Pocsi I."/>
            <person name="Punt P.J."/>
            <person name="Ram A.F."/>
            <person name="Ren Q."/>
            <person name="Robellet X."/>
            <person name="Robson G."/>
            <person name="Seiboth B."/>
            <person name="van Solingen P."/>
            <person name="Specht T."/>
            <person name="Sun J."/>
            <person name="Taheri-Talesh N."/>
            <person name="Takeshita N."/>
            <person name="Ussery D."/>
            <person name="vanKuyk P.A."/>
            <person name="Visser H."/>
            <person name="van de Vondervoort P.J."/>
            <person name="de Vries R.P."/>
            <person name="Walton J."/>
            <person name="Xiang X."/>
            <person name="Xiong Y."/>
            <person name="Zeng A.P."/>
            <person name="Brandt B.W."/>
            <person name="Cornell M.J."/>
            <person name="van den Hondel C.A."/>
            <person name="Visser J."/>
            <person name="Oliver S.G."/>
            <person name="Turner G."/>
        </authorList>
    </citation>
    <scope>GENOME REANNOTATION</scope>
    <source>
        <strain>FGSC A4 / ATCC 38163 / CBS 112.46 / NRRL 194 / M139</strain>
    </source>
</reference>
<comment type="function">
    <text>Allows acetamide to be used as a sole carbon or nitrogen source.</text>
</comment>
<comment type="catalytic activity">
    <reaction>
        <text>a monocarboxylic acid amide + H2O = a monocarboxylate + NH4(+)</text>
        <dbReference type="Rhea" id="RHEA:12020"/>
        <dbReference type="ChEBI" id="CHEBI:15377"/>
        <dbReference type="ChEBI" id="CHEBI:28938"/>
        <dbReference type="ChEBI" id="CHEBI:35757"/>
        <dbReference type="ChEBI" id="CHEBI:83628"/>
        <dbReference type="EC" id="3.5.1.4"/>
    </reaction>
</comment>
<comment type="catalytic activity">
    <reaction>
        <text>acetamide + H2O = acetate + NH4(+)</text>
        <dbReference type="Rhea" id="RHEA:45048"/>
        <dbReference type="ChEBI" id="CHEBI:15377"/>
        <dbReference type="ChEBI" id="CHEBI:27856"/>
        <dbReference type="ChEBI" id="CHEBI:28938"/>
        <dbReference type="ChEBI" id="CHEBI:30089"/>
        <dbReference type="EC" id="3.5.1.4"/>
    </reaction>
</comment>
<comment type="induction">
    <text>Acetate induction mediated by facB regulatory gene and probably by amdA regulatory gene. Omega amino acid induction is dependent on amdR regulatory gene.</text>
</comment>
<comment type="similarity">
    <text evidence="2">Belongs to the amidase family.</text>
</comment>
<feature type="chain" id="PRO_0000105129" description="Acetamidase">
    <location>
        <begin position="1"/>
        <end position="548"/>
    </location>
</feature>
<feature type="active site" description="Charge relay system" evidence="1">
    <location>
        <position position="129"/>
    </location>
</feature>
<feature type="active site" description="Charge relay system" evidence="1">
    <location>
        <position position="204"/>
    </location>
</feature>
<feature type="active site" description="Acyl-ester intermediate" evidence="1">
    <location>
        <position position="228"/>
    </location>
</feature>
<name>AMDS_EMENI</name>
<protein>
    <recommendedName>
        <fullName>Acetamidase</fullName>
        <ecNumber>3.5.1.4</ecNumber>
    </recommendedName>
</protein>
<evidence type="ECO:0000250" key="1"/>
<evidence type="ECO:0000305" key="2"/>
<gene>
    <name type="primary">amdS</name>
    <name type="ORF">AN8777</name>
</gene>